<name>STHA_PHANO</name>
<sequence>MSHNKPVNEPIVIIGSGCRFAGGANSPSKLWDLLRNPKDLRSDVTSRFNSQGYYHKDGTHHGHMNVLQSYLIGEDTRLFDAEFFGVNPVEAKAMDPQQRLLLEVVYEAIESAGLSMERMRGSDTAVFAGLMCGDYEAMMLRDLDQAPTHFAIGTSRAILSNRVSYFFDWHGPSITIDTACSSSLVAVHHAVQALRSGDSHAAIACGSNLILGPEMYVIESKLKMLSPDGLSRMWDKDANGYARGEGVTAVVLKTLSQALADNDRIEAVIRETGVNQDGATPGITMPSASAQRALIHSVYRKAGLDPESPNDRPQYIESHGTGTPAGGSIKTVLGHTEGSAGIAALLKVTKAIQNATVPPNLWFQQLNHKLEPFYGNIQIPTQPVTWPATEKRRRKRASINNFGFGGTNAHAIVEGYEPKEEIPPPSFHHVDATVSTPFVFSAASKESLRANLAAYALHLDAHPQISTRDLAYTLRERRSVLPFRIAFPESNTKDLKLSIAARLSESDGEGLGVRTWAANNGGSSKLLGIFTGQGAQYARMGTELLAQTNMARKTLEELEGYLAELPEEDRPSWSLQSELLADPSVSRVGEAAISQPLCTAVQIILVKLLCSAKVRFDTVIGHSSGEIAAAYAAGYLSARDALLVAYYRGLHCKLAASPNGNVKGAMLAAGTSLEDATELCEDEEFSGRINVAASNSSSSVTISGDEDAIDELATVFDDEKKFNRRLKVDTAYHSKHMLPCFEPYVASLRRVGITVLPGNDQCTWISSVHEGRAINPATDELADVYWAQNMTKPVLFSQAVQAAVAPVRGGEPFAAALEVGPHAALAGPAKQTIQEVAQKEIPYHGSLVRGENATKAFATCLGFLWERLDAASLDLGSCEAALSSSGGVQQYTVLADLPTYQWKHETVYWAESRRSRRMRLREGPFHQLLGNVSPDSAPHILRWKNVLKPKEMTWLEGHQVQNQVVLPAATYICTAIEAARSLAQGKNIQLIELSNFCIHNAITFDQNDVGVEVLVELSRINVKENHVNATFTYTAGLGDETNDLALAANGELNILLVDDDPSLALFPERQEPPPHMIPVQPSRLYDFMKGLEYDFSGPFQSLAKLERKLGTATCLAKKARKSVPDADDLLVHPVDLDAAFQSVMLAYSYPGDDQLRLLHLPTSIERLRVNPAALSSQKYVENDTTILDSTCTTADRAEPGNGFSGSVNMYAAGFDHAAIQVEQVKFKPVGSDAKDDRNVFYKMHWVPSKPDGLLAAASVPITERDRKLMFVLSRIAAYYLRKFDEMIAEDDPARLESPLCHYMRYARHMMGLLRAGEHKWAYKEWLQDTEQDVFDDIASKGFQDNSDVRIMLLVGSTMPRVFRRETTMLEHFRTSGLLDEYYSNGFGTKQCTLWVAGVLKQLADCNPHLNLLEIGAGTGSATKTILKSVGHDFASYTFTDISSSFFENAAETFSDYGSRMVFKVCNAENDPVEQGFEAGTYDVVIAFMVIHACAKLDEAVANLRKLLKPGGLLVLGEGASDGAMQAGAGFIFGTLPGWWRGVDEGRTLSPLVSASEWQVILRDAGFSGIDTMSPPELFDAFGITLFVSTAVDERIEFVRNPRAKASRAVYNKVVVIGGITSTIAKLAEEIQTVLTPLAIQVLLCTSLEDLQENVLDDETVIISLVDLEAPVFKDITSERWYKFRLLFETKREILWLTSGRLEDEPYSNMTVGFGRSAMHEEETLRVQYLDVADVSQLNAVMVMQYLLRFTSSELDKSDILYTKEPEVIIDANGRELVPRLFTIQAANNRLNSVTRPIYEDVDTSQSVVELRYAKEEPSFRKLSRYEVSAKLEPSHDTTIKLRVAYSVISALRCPAGYQYLIMGFDESGARRVALVNSLTSVLCVPLKSTILCELYDMSEPSYLTLLAAEIIAMTIVDPLFTGQKLAILNASKLIIQAIASYATAKGVETTFIVDAGGEFVPKDVAVQSHLPLYPSRSDMSFILPTNLACFVSFSALNKADSEDAMKSLLPFYCQKMNTSTLFSTHGVDTGALGATAQHVLSRAISSRKGRVIDWTPPSTSLSVRITRFEMTQLFKADKTYWLVGLSGALGISLCDWMIERGVKYLVLTSRNPKIDERWIENHEKHGVMIKILLCDVTDEAAIKDVHQTIVRTLPPIAGLLNGAMVLRDVSVRNMEYAQVTDVIRPKVLGSIHLDRIFHDIDLDFFVLLSSINCVIGNVGQANYAAANMGMIGVAGHRRKRGLRSSVVNVGAIIGVGYITQSDRQLDVTVAKTAMMHLSEQDFHQIFAECMEAGHLDNDSGPEISTGLLEITPDTIDIPPWYSDPKFKRFQVHQAAAGAGKAEVANSASTQELLLACRSQADITKVVQQAYCAQLRRILQVSTADEDLMMMRGVDLGFDSLLSVDVRSWFLKNFRVSIPVLKIMANDVRMSTLVDLAAESIPAELIPHVQQQQQQAGRQDASSNTSSDDETASTLPTSPESASPGTSTPVPEKDISPVDTFNSVDWYFETTPPSISTFSELTSAPAPRSDPKVVVLTGCSGLLGHHLLSTLIAQPSIRKIICLAVRSLPSRLSSGELPLPGDKIEYHAGDLTAPQLGLSTSTWISIFKQADAVIHNGSDTSHLKYYSALKLANVDSTKQLVSTCLQRMIPFHYVSSAGVALFAERDAFPPVSCTTTGKTPPADGSHGYMCGKWVCEKMLERVYEQYHLPIVIQRPSTIIRSGEDAAVERAGFDWVNSLLHFAHQTQTVPRVDHNAGAFDLVSVDTCCSDVARKLTRATKERITYVNNVGDVVIPMASMADVGLDRIGKRYNVLTMDEWTKTVVEAGMHPAVAALIETFDEPGVEKYPMLLRE</sequence>
<protein>
    <recommendedName>
        <fullName evidence="8">Highly reducing polyketide synthase sthA</fullName>
        <shortName evidence="8">HS-PKS sthA</shortName>
        <ecNumber evidence="9">2.3.1.-</ecNumber>
    </recommendedName>
    <alternativeName>
        <fullName evidence="8">Stemphyloxin II biosynthesis cluster protein A</fullName>
    </alternativeName>
</protein>
<comment type="function">
    <text evidence="7">Highly reducing polyketide synthase; part of the gene cluster that mediates the biosynthesis of the phytotoxin stemphyloxin II (PubMed:31553484). The first step of the pathway is the synthesis of dehydroprobetaenone I by the polyketide synthase sthA and the enoyl reductase sthE via condensation of one acetyl-CoA starter unit with 7 malonyl-CoA units and 5 methylations (PubMed:31553484). The C-terminal reductase (R) domain of sthA catalyzes the reductive release of the polyketide chain (PubMed:31553484). Because sthA lacks a designated enoylreductase (ER) domain, the required activity is provided the enoyl reductase sthE (PubMed:31553484). The short-chain dehydrogenase/reductase sthC then catalyzes reduction of dehydroprobetaenone I to probetaenone I (PubMed:31553484). The cytochrome P450 monooxygenase sthF catalyzes successive epoxidation, oxidation (resulting from epoxide opening) and hydroxylation to install a tertiary alcohol in the decaline ring to yield betaenone C from dehydroprobetaenone I and betaenone B from probetaenone I (PubMed:31553484). The FAD-linked oxidoreductase sthB is responsible for the conversion of betaenone C to betaenone A via an intramolecular aldol reaction between C-1 and C-17 to form the bridged tricyclic system in betaenone A (PubMed:31553484). Finally, the cytochrome P450 monooxygenase sthD catalyzes the hydroxylation of C-15 to afford the final metabolite stemphyloxin II (PubMed:31553484).</text>
</comment>
<comment type="catalytic activity">
    <reaction evidence="7">
        <text>7 malonyl-CoA + acetyl-CoA + 10 AH2 + 5 S-adenosyl-L-methionine + 2 H(+) = dehydroprobetaenone I + 10 A + 5 S-adenosyl-L-homocysteine + 7 CO2 + 8 CoA + 6 H2O</text>
        <dbReference type="Rhea" id="RHEA:51348"/>
        <dbReference type="ChEBI" id="CHEBI:13193"/>
        <dbReference type="ChEBI" id="CHEBI:15377"/>
        <dbReference type="ChEBI" id="CHEBI:15378"/>
        <dbReference type="ChEBI" id="CHEBI:16526"/>
        <dbReference type="ChEBI" id="CHEBI:17499"/>
        <dbReference type="ChEBI" id="CHEBI:57287"/>
        <dbReference type="ChEBI" id="CHEBI:57288"/>
        <dbReference type="ChEBI" id="CHEBI:57384"/>
        <dbReference type="ChEBI" id="CHEBI:57856"/>
        <dbReference type="ChEBI" id="CHEBI:59789"/>
        <dbReference type="ChEBI" id="CHEBI:145061"/>
    </reaction>
    <physiologicalReaction direction="left-to-right" evidence="7">
        <dbReference type="Rhea" id="RHEA:51349"/>
    </physiologicalReaction>
</comment>
<comment type="cofactor">
    <cofactor evidence="1">
        <name>pantetheine 4'-phosphate</name>
        <dbReference type="ChEBI" id="CHEBI:47942"/>
    </cofactor>
    <text evidence="1">Binds 1 phosphopantetheine covalently.</text>
</comment>
<comment type="pathway">
    <text evidence="7">Mycotoxin biosynthesis.</text>
</comment>
<comment type="induction">
    <text evidence="7">Expression is highly up-regulated during plant infection.</text>
</comment>
<comment type="domain">
    <text evidence="7">Multidomain protein; including a ketosynthase (KS) that catalyzes repeated decarboxylative condensation to elongate the polyketide backbone; a malonyl-CoA:ACP transacylase (MAT) that selects and transfers the extender unit malonyl-CoA; a dehydratase (DH) domain that reduces hydroxyl groups to enoyl groups; a methyltransferase (CMeT) domain responsible for the incorporation of methyl groups; a ketoreductase (KR) domain that catalyzes beta-ketoreduction steps; an acyl-carrier protein (ACP) that serves as the tether of the growing and completed polyketide via its phosphopantetheinyl arm; and a C-terminal reductase (R) domain that catalyzes the reductive release of the polyketide chain.</text>
</comment>
<reference key="1">
    <citation type="journal article" date="2007" name="Plant Cell">
        <title>Dothideomycete-plant interactions illuminated by genome sequencing and EST analysis of the wheat pathogen Stagonospora nodorum.</title>
        <authorList>
            <person name="Hane J.K."/>
            <person name="Lowe R.G.T."/>
            <person name="Solomon P.S."/>
            <person name="Tan K.-C."/>
            <person name="Schoch C.L."/>
            <person name="Spatafora J.W."/>
            <person name="Crous P.W."/>
            <person name="Kodira C.D."/>
            <person name="Birren B.W."/>
            <person name="Galagan J.E."/>
            <person name="Torriani S.F.F."/>
            <person name="McDonald B.A."/>
            <person name="Oliver R.P."/>
        </authorList>
    </citation>
    <scope>NUCLEOTIDE SEQUENCE [LARGE SCALE GENOMIC DNA]</scope>
    <source>
        <strain>SN15 / ATCC MYA-4574 / FGSC 10173</strain>
    </source>
</reference>
<reference key="2">
    <citation type="journal article" date="2019" name="Chemistry">
        <title>Biosynthesis of a Tricyclo[6.2.2.02,7]dodecane System by a Berberine Bridge Enzyme-like Intramolecular Aldolase.</title>
        <authorList>
            <person name="Li H."/>
            <person name="Hu J."/>
            <person name="Wei H."/>
            <person name="Solomon P.S."/>
            <person name="Stubbs K.A."/>
            <person name="Chooi Y.H."/>
        </authorList>
    </citation>
    <scope>INDUCTION</scope>
    <scope>FUNCTION</scope>
    <scope>CATALYTIC ACTIVITY</scope>
    <scope>PATHWAY</scope>
</reference>
<keyword id="KW-0012">Acyltransferase</keyword>
<keyword id="KW-0489">Methyltransferase</keyword>
<keyword id="KW-0511">Multifunctional enzyme</keyword>
<keyword id="KW-0521">NADP</keyword>
<keyword id="KW-0560">Oxidoreductase</keyword>
<keyword id="KW-0596">Phosphopantetheine</keyword>
<keyword id="KW-0597">Phosphoprotein</keyword>
<keyword id="KW-0949">S-adenosyl-L-methionine</keyword>
<keyword id="KW-0808">Transferase</keyword>
<feature type="chain" id="PRO_0000448648" description="Highly reducing polyketide synthase sthA">
    <location>
        <begin position="1"/>
        <end position="2851"/>
    </location>
</feature>
<feature type="domain" description="Ketosynthase family 3 (KS3)" evidence="4">
    <location>
        <begin position="8"/>
        <end position="415"/>
    </location>
</feature>
<feature type="domain" description="PKS/mFAS DH" evidence="5">
    <location>
        <begin position="926"/>
        <end position="1235"/>
    </location>
</feature>
<feature type="domain" description="Carrier" evidence="3">
    <location>
        <begin position="2360"/>
        <end position="2443"/>
    </location>
</feature>
<feature type="region of interest" description="Disordered" evidence="6">
    <location>
        <begin position="304"/>
        <end position="324"/>
    </location>
</feature>
<feature type="region of interest" description="Acyl transferase (AT) domain" evidence="2">
    <location>
        <begin position="529"/>
        <end position="851"/>
    </location>
</feature>
<feature type="region of interest" description="N-terminal hotdog fold" evidence="5">
    <location>
        <begin position="926"/>
        <end position="1059"/>
    </location>
</feature>
<feature type="region of interest" description="Dehydratase (DH) domain" evidence="2">
    <location>
        <begin position="949"/>
        <end position="1242"/>
    </location>
</feature>
<feature type="region of interest" description="C-terminal hotdog fold" evidence="5">
    <location>
        <begin position="1076"/>
        <end position="1235"/>
    </location>
</feature>
<feature type="region of interest" description="Methyltransferase (MT) domain" evidence="2">
    <location>
        <begin position="1390"/>
        <end position="1577"/>
    </location>
</feature>
<feature type="region of interest" description="Ketoreductase (KR)domain" evidence="2">
    <location>
        <begin position="2079"/>
        <end position="2252"/>
    </location>
</feature>
<feature type="region of interest" description="Disordered" evidence="6">
    <location>
        <begin position="2447"/>
        <end position="2496"/>
    </location>
</feature>
<feature type="region of interest" description="Reductase (R) domain" evidence="2">
    <location>
        <begin position="2535"/>
        <end position="2767"/>
    </location>
</feature>
<feature type="compositionally biased region" description="Polar residues" evidence="6">
    <location>
        <begin position="2455"/>
        <end position="2488"/>
    </location>
</feature>
<feature type="active site" description="Proton acceptor; for dehydratase activity" evidence="5">
    <location>
        <position position="958"/>
    </location>
</feature>
<feature type="active site" description="Proton donor; for dehydratase activity" evidence="5">
    <location>
        <position position="1137"/>
    </location>
</feature>
<feature type="modified residue" description="O-(pantetheine 4'-phosphoryl)serine" evidence="3">
    <location>
        <position position="2399"/>
    </location>
</feature>
<gene>
    <name evidence="8" type="primary">sthA</name>
    <name type="ORF">SNOG_07866</name>
</gene>
<accession>Q0UK48</accession>
<evidence type="ECO:0000250" key="1">
    <source>
        <dbReference type="UniProtKB" id="Q9Y8A5"/>
    </source>
</evidence>
<evidence type="ECO:0000255" key="2"/>
<evidence type="ECO:0000255" key="3">
    <source>
        <dbReference type="PROSITE-ProRule" id="PRU00258"/>
    </source>
</evidence>
<evidence type="ECO:0000255" key="4">
    <source>
        <dbReference type="PROSITE-ProRule" id="PRU01348"/>
    </source>
</evidence>
<evidence type="ECO:0000255" key="5">
    <source>
        <dbReference type="PROSITE-ProRule" id="PRU01363"/>
    </source>
</evidence>
<evidence type="ECO:0000256" key="6">
    <source>
        <dbReference type="SAM" id="MobiDB-lite"/>
    </source>
</evidence>
<evidence type="ECO:0000269" key="7">
    <source>
    </source>
</evidence>
<evidence type="ECO:0000303" key="8">
    <source>
    </source>
</evidence>
<evidence type="ECO:0000305" key="9">
    <source>
    </source>
</evidence>
<dbReference type="EC" id="2.3.1.-" evidence="9"/>
<dbReference type="EMBL" id="CH445335">
    <property type="protein sequence ID" value="EAT85332.2"/>
    <property type="molecule type" value="Genomic_DNA"/>
</dbReference>
<dbReference type="RefSeq" id="XP_001798193.1">
    <property type="nucleotide sequence ID" value="XM_001798141.1"/>
</dbReference>
<dbReference type="SMR" id="Q0UK48"/>
<dbReference type="STRING" id="321614.Q0UK48"/>
<dbReference type="EnsemblFungi" id="SNOT_07866">
    <property type="protein sequence ID" value="SNOT_07866"/>
    <property type="gene ID" value="SNOG_07866"/>
</dbReference>
<dbReference type="GeneID" id="5975086"/>
<dbReference type="KEGG" id="pno:SNOG_07866"/>
<dbReference type="VEuPathDB" id="FungiDB:JI435_078660"/>
<dbReference type="eggNOG" id="KOG1202">
    <property type="taxonomic scope" value="Eukaryota"/>
</dbReference>
<dbReference type="HOGENOM" id="CLU_000022_31_0_1"/>
<dbReference type="InParanoid" id="Q0UK48"/>
<dbReference type="Proteomes" id="UP000001055">
    <property type="component" value="Unassembled WGS sequence"/>
</dbReference>
<dbReference type="GO" id="GO:0004315">
    <property type="term" value="F:3-oxoacyl-[acyl-carrier-protein] synthase activity"/>
    <property type="evidence" value="ECO:0007669"/>
    <property type="project" value="InterPro"/>
</dbReference>
<dbReference type="GO" id="GO:0004312">
    <property type="term" value="F:fatty acid synthase activity"/>
    <property type="evidence" value="ECO:0000318"/>
    <property type="project" value="GO_Central"/>
</dbReference>
<dbReference type="GO" id="GO:0008168">
    <property type="term" value="F:methyltransferase activity"/>
    <property type="evidence" value="ECO:0007669"/>
    <property type="project" value="UniProtKB-KW"/>
</dbReference>
<dbReference type="GO" id="GO:0016491">
    <property type="term" value="F:oxidoreductase activity"/>
    <property type="evidence" value="ECO:0007669"/>
    <property type="project" value="UniProtKB-KW"/>
</dbReference>
<dbReference type="GO" id="GO:0006633">
    <property type="term" value="P:fatty acid biosynthetic process"/>
    <property type="evidence" value="ECO:0000318"/>
    <property type="project" value="GO_Central"/>
</dbReference>
<dbReference type="GO" id="GO:0032259">
    <property type="term" value="P:methylation"/>
    <property type="evidence" value="ECO:0007669"/>
    <property type="project" value="UniProtKB-KW"/>
</dbReference>
<dbReference type="GO" id="GO:0044550">
    <property type="term" value="P:secondary metabolite biosynthetic process"/>
    <property type="evidence" value="ECO:0000318"/>
    <property type="project" value="GO_Central"/>
</dbReference>
<dbReference type="CDD" id="cd02440">
    <property type="entry name" value="AdoMet_MTases"/>
    <property type="match status" value="1"/>
</dbReference>
<dbReference type="CDD" id="cd00833">
    <property type="entry name" value="PKS"/>
    <property type="match status" value="1"/>
</dbReference>
<dbReference type="Gene3D" id="3.40.47.10">
    <property type="match status" value="1"/>
</dbReference>
<dbReference type="Gene3D" id="3.40.366.10">
    <property type="entry name" value="Malonyl-Coenzyme A Acyl Carrier Protein, domain 2"/>
    <property type="match status" value="1"/>
</dbReference>
<dbReference type="Gene3D" id="3.40.50.720">
    <property type="entry name" value="NAD(P)-binding Rossmann-like Domain"/>
    <property type="match status" value="2"/>
</dbReference>
<dbReference type="Gene3D" id="3.10.129.110">
    <property type="entry name" value="Polyketide synthase dehydratase"/>
    <property type="match status" value="1"/>
</dbReference>
<dbReference type="Gene3D" id="3.40.50.150">
    <property type="entry name" value="Vaccinia Virus protein VP39"/>
    <property type="match status" value="1"/>
</dbReference>
<dbReference type="InterPro" id="IPR001227">
    <property type="entry name" value="Ac_transferase_dom_sf"/>
</dbReference>
<dbReference type="InterPro" id="IPR014043">
    <property type="entry name" value="Acyl_transferase_dom"/>
</dbReference>
<dbReference type="InterPro" id="IPR016035">
    <property type="entry name" value="Acyl_Trfase/lysoPLipase"/>
</dbReference>
<dbReference type="InterPro" id="IPR013120">
    <property type="entry name" value="Far_NAD-bd"/>
</dbReference>
<dbReference type="InterPro" id="IPR018201">
    <property type="entry name" value="Ketoacyl_synth_AS"/>
</dbReference>
<dbReference type="InterPro" id="IPR014031">
    <property type="entry name" value="Ketoacyl_synth_C"/>
</dbReference>
<dbReference type="InterPro" id="IPR014030">
    <property type="entry name" value="Ketoacyl_synth_N"/>
</dbReference>
<dbReference type="InterPro" id="IPR016036">
    <property type="entry name" value="Malonyl_transacylase_ACP-bd"/>
</dbReference>
<dbReference type="InterPro" id="IPR013217">
    <property type="entry name" value="Methyltransf_12"/>
</dbReference>
<dbReference type="InterPro" id="IPR036291">
    <property type="entry name" value="NAD(P)-bd_dom_sf"/>
</dbReference>
<dbReference type="InterPro" id="IPR032821">
    <property type="entry name" value="PKS_assoc"/>
</dbReference>
<dbReference type="InterPro" id="IPR020841">
    <property type="entry name" value="PKS_Beta-ketoAc_synthase_dom"/>
</dbReference>
<dbReference type="InterPro" id="IPR042104">
    <property type="entry name" value="PKS_dehydratase_sf"/>
</dbReference>
<dbReference type="InterPro" id="IPR020807">
    <property type="entry name" value="PKS_DH"/>
</dbReference>
<dbReference type="InterPro" id="IPR049551">
    <property type="entry name" value="PKS_DH_C"/>
</dbReference>
<dbReference type="InterPro" id="IPR049552">
    <property type="entry name" value="PKS_DH_N"/>
</dbReference>
<dbReference type="InterPro" id="IPR013968">
    <property type="entry name" value="PKS_KR"/>
</dbReference>
<dbReference type="InterPro" id="IPR049900">
    <property type="entry name" value="PKS_mFAS_DH"/>
</dbReference>
<dbReference type="InterPro" id="IPR050091">
    <property type="entry name" value="PKS_NRPS_Biosynth_Enz"/>
</dbReference>
<dbReference type="InterPro" id="IPR009081">
    <property type="entry name" value="PP-bd_ACP"/>
</dbReference>
<dbReference type="InterPro" id="IPR006162">
    <property type="entry name" value="Ppantetheine_attach_site"/>
</dbReference>
<dbReference type="InterPro" id="IPR029063">
    <property type="entry name" value="SAM-dependent_MTases_sf"/>
</dbReference>
<dbReference type="InterPro" id="IPR016039">
    <property type="entry name" value="Thiolase-like"/>
</dbReference>
<dbReference type="PANTHER" id="PTHR43775">
    <property type="entry name" value="FATTY ACID SYNTHASE"/>
    <property type="match status" value="1"/>
</dbReference>
<dbReference type="PANTHER" id="PTHR43775:SF20">
    <property type="entry name" value="HYBRID PKS-NRPS SYNTHETASE APDA"/>
    <property type="match status" value="1"/>
</dbReference>
<dbReference type="Pfam" id="PF00698">
    <property type="entry name" value="Acyl_transf_1"/>
    <property type="match status" value="1"/>
</dbReference>
<dbReference type="Pfam" id="PF16197">
    <property type="entry name" value="KAsynt_C_assoc"/>
    <property type="match status" value="1"/>
</dbReference>
<dbReference type="Pfam" id="PF00109">
    <property type="entry name" value="ketoacyl-synt"/>
    <property type="match status" value="1"/>
</dbReference>
<dbReference type="Pfam" id="PF02801">
    <property type="entry name" value="Ketoacyl-synt_C"/>
    <property type="match status" value="1"/>
</dbReference>
<dbReference type="Pfam" id="PF08659">
    <property type="entry name" value="KR"/>
    <property type="match status" value="1"/>
</dbReference>
<dbReference type="Pfam" id="PF08242">
    <property type="entry name" value="Methyltransf_12"/>
    <property type="match status" value="1"/>
</dbReference>
<dbReference type="Pfam" id="PF07993">
    <property type="entry name" value="NAD_binding_4"/>
    <property type="match status" value="1"/>
</dbReference>
<dbReference type="Pfam" id="PF21089">
    <property type="entry name" value="PKS_DH_N"/>
    <property type="match status" value="1"/>
</dbReference>
<dbReference type="Pfam" id="PF14765">
    <property type="entry name" value="PS-DH"/>
    <property type="match status" value="1"/>
</dbReference>
<dbReference type="SMART" id="SM00827">
    <property type="entry name" value="PKS_AT"/>
    <property type="match status" value="1"/>
</dbReference>
<dbReference type="SMART" id="SM00826">
    <property type="entry name" value="PKS_DH"/>
    <property type="match status" value="1"/>
</dbReference>
<dbReference type="SMART" id="SM00822">
    <property type="entry name" value="PKS_KR"/>
    <property type="match status" value="1"/>
</dbReference>
<dbReference type="SMART" id="SM00825">
    <property type="entry name" value="PKS_KS"/>
    <property type="match status" value="1"/>
</dbReference>
<dbReference type="SUPFAM" id="SSF52151">
    <property type="entry name" value="FabD/lysophospholipase-like"/>
    <property type="match status" value="1"/>
</dbReference>
<dbReference type="SUPFAM" id="SSF51735">
    <property type="entry name" value="NAD(P)-binding Rossmann-fold domains"/>
    <property type="match status" value="2"/>
</dbReference>
<dbReference type="SUPFAM" id="SSF55048">
    <property type="entry name" value="Probable ACP-binding domain of malonyl-CoA ACP transacylase"/>
    <property type="match status" value="1"/>
</dbReference>
<dbReference type="SUPFAM" id="SSF53335">
    <property type="entry name" value="S-adenosyl-L-methionine-dependent methyltransferases"/>
    <property type="match status" value="1"/>
</dbReference>
<dbReference type="SUPFAM" id="SSF53901">
    <property type="entry name" value="Thiolase-like"/>
    <property type="match status" value="1"/>
</dbReference>
<dbReference type="PROSITE" id="PS50075">
    <property type="entry name" value="CARRIER"/>
    <property type="match status" value="1"/>
</dbReference>
<dbReference type="PROSITE" id="PS00606">
    <property type="entry name" value="KS3_1"/>
    <property type="match status" value="1"/>
</dbReference>
<dbReference type="PROSITE" id="PS52004">
    <property type="entry name" value="KS3_2"/>
    <property type="match status" value="1"/>
</dbReference>
<dbReference type="PROSITE" id="PS00012">
    <property type="entry name" value="PHOSPHOPANTETHEINE"/>
    <property type="match status" value="1"/>
</dbReference>
<dbReference type="PROSITE" id="PS52019">
    <property type="entry name" value="PKS_MFAS_DH"/>
    <property type="match status" value="1"/>
</dbReference>
<organism>
    <name type="scientific">Phaeosphaeria nodorum (strain SN15 / ATCC MYA-4574 / FGSC 10173)</name>
    <name type="common">Glume blotch fungus</name>
    <name type="synonym">Parastagonospora nodorum</name>
    <dbReference type="NCBI Taxonomy" id="321614"/>
    <lineage>
        <taxon>Eukaryota</taxon>
        <taxon>Fungi</taxon>
        <taxon>Dikarya</taxon>
        <taxon>Ascomycota</taxon>
        <taxon>Pezizomycotina</taxon>
        <taxon>Dothideomycetes</taxon>
        <taxon>Pleosporomycetidae</taxon>
        <taxon>Pleosporales</taxon>
        <taxon>Pleosporineae</taxon>
        <taxon>Phaeosphaeriaceae</taxon>
        <taxon>Parastagonospora</taxon>
    </lineage>
</organism>
<proteinExistence type="evidence at protein level"/>